<organism>
    <name type="scientific">Staphylococcus aureus (strain COL)</name>
    <dbReference type="NCBI Taxonomy" id="93062"/>
    <lineage>
        <taxon>Bacteria</taxon>
        <taxon>Bacillati</taxon>
        <taxon>Bacillota</taxon>
        <taxon>Bacilli</taxon>
        <taxon>Bacillales</taxon>
        <taxon>Staphylococcaceae</taxon>
        <taxon>Staphylococcus</taxon>
    </lineage>
</organism>
<gene>
    <name evidence="1" type="primary">leuB</name>
    <name type="ordered locus">SACOL2047</name>
</gene>
<keyword id="KW-0028">Amino-acid biosynthesis</keyword>
<keyword id="KW-0100">Branched-chain amino acid biosynthesis</keyword>
<keyword id="KW-0963">Cytoplasm</keyword>
<keyword id="KW-0432">Leucine biosynthesis</keyword>
<keyword id="KW-0460">Magnesium</keyword>
<keyword id="KW-0464">Manganese</keyword>
<keyword id="KW-0479">Metal-binding</keyword>
<keyword id="KW-0520">NAD</keyword>
<keyword id="KW-0560">Oxidoreductase</keyword>
<feature type="chain" id="PRO_0000083751" description="3-isopropylmalate dehydrogenase">
    <location>
        <begin position="1"/>
        <end position="348"/>
    </location>
</feature>
<feature type="binding site" evidence="1">
    <location>
        <begin position="76"/>
        <end position="87"/>
    </location>
    <ligand>
        <name>NAD(+)</name>
        <dbReference type="ChEBI" id="CHEBI:57540"/>
    </ligand>
</feature>
<feature type="binding site" evidence="1">
    <location>
        <position position="94"/>
    </location>
    <ligand>
        <name>substrate</name>
    </ligand>
</feature>
<feature type="binding site" evidence="1">
    <location>
        <position position="104"/>
    </location>
    <ligand>
        <name>substrate</name>
    </ligand>
</feature>
<feature type="binding site" evidence="1">
    <location>
        <position position="132"/>
    </location>
    <ligand>
        <name>substrate</name>
    </ligand>
</feature>
<feature type="binding site" evidence="1">
    <location>
        <position position="217"/>
    </location>
    <ligand>
        <name>Mg(2+)</name>
        <dbReference type="ChEBI" id="CHEBI:18420"/>
    </ligand>
</feature>
<feature type="binding site" evidence="1">
    <location>
        <position position="217"/>
    </location>
    <ligand>
        <name>substrate</name>
    </ligand>
</feature>
<feature type="binding site" evidence="1">
    <location>
        <position position="241"/>
    </location>
    <ligand>
        <name>Mg(2+)</name>
        <dbReference type="ChEBI" id="CHEBI:18420"/>
    </ligand>
</feature>
<feature type="binding site" evidence="1">
    <location>
        <position position="245"/>
    </location>
    <ligand>
        <name>Mg(2+)</name>
        <dbReference type="ChEBI" id="CHEBI:18420"/>
    </ligand>
</feature>
<feature type="binding site" evidence="1">
    <location>
        <begin position="275"/>
        <end position="287"/>
    </location>
    <ligand>
        <name>NAD(+)</name>
        <dbReference type="ChEBI" id="CHEBI:57540"/>
    </ligand>
</feature>
<feature type="site" description="Important for catalysis" evidence="1">
    <location>
        <position position="139"/>
    </location>
</feature>
<feature type="site" description="Important for catalysis" evidence="1">
    <location>
        <position position="185"/>
    </location>
</feature>
<protein>
    <recommendedName>
        <fullName evidence="1">3-isopropylmalate dehydrogenase</fullName>
        <ecNumber evidence="1">1.1.1.85</ecNumber>
    </recommendedName>
    <alternativeName>
        <fullName evidence="1">3-IPM-DH</fullName>
    </alternativeName>
    <alternativeName>
        <fullName evidence="1">Beta-IPM dehydrogenase</fullName>
        <shortName evidence="1">IMDH</shortName>
    </alternativeName>
</protein>
<evidence type="ECO:0000255" key="1">
    <source>
        <dbReference type="HAMAP-Rule" id="MF_01033"/>
    </source>
</evidence>
<reference key="1">
    <citation type="journal article" date="2005" name="J. Bacteriol.">
        <title>Insights on evolution of virulence and resistance from the complete genome analysis of an early methicillin-resistant Staphylococcus aureus strain and a biofilm-producing methicillin-resistant Staphylococcus epidermidis strain.</title>
        <authorList>
            <person name="Gill S.R."/>
            <person name="Fouts D.E."/>
            <person name="Archer G.L."/>
            <person name="Mongodin E.F."/>
            <person name="DeBoy R.T."/>
            <person name="Ravel J."/>
            <person name="Paulsen I.T."/>
            <person name="Kolonay J.F."/>
            <person name="Brinkac L.M."/>
            <person name="Beanan M.J."/>
            <person name="Dodson R.J."/>
            <person name="Daugherty S.C."/>
            <person name="Madupu R."/>
            <person name="Angiuoli S.V."/>
            <person name="Durkin A.S."/>
            <person name="Haft D.H."/>
            <person name="Vamathevan J.J."/>
            <person name="Khouri H."/>
            <person name="Utterback T.R."/>
            <person name="Lee C."/>
            <person name="Dimitrov G."/>
            <person name="Jiang L."/>
            <person name="Qin H."/>
            <person name="Weidman J."/>
            <person name="Tran K."/>
            <person name="Kang K.H."/>
            <person name="Hance I.R."/>
            <person name="Nelson K.E."/>
            <person name="Fraser C.M."/>
        </authorList>
    </citation>
    <scope>NUCLEOTIDE SEQUENCE [LARGE SCALE GENOMIC DNA]</scope>
    <source>
        <strain>COL</strain>
    </source>
</reference>
<accession>Q5HEE3</accession>
<comment type="function">
    <text evidence="1">Catalyzes the oxidation of 3-carboxy-2-hydroxy-4-methylpentanoate (3-isopropylmalate) to 3-carboxy-4-methyl-2-oxopentanoate. The product decarboxylates to 4-methyl-2 oxopentanoate.</text>
</comment>
<comment type="catalytic activity">
    <reaction evidence="1">
        <text>(2R,3S)-3-isopropylmalate + NAD(+) = 4-methyl-2-oxopentanoate + CO2 + NADH</text>
        <dbReference type="Rhea" id="RHEA:32271"/>
        <dbReference type="ChEBI" id="CHEBI:16526"/>
        <dbReference type="ChEBI" id="CHEBI:17865"/>
        <dbReference type="ChEBI" id="CHEBI:35121"/>
        <dbReference type="ChEBI" id="CHEBI:57540"/>
        <dbReference type="ChEBI" id="CHEBI:57945"/>
        <dbReference type="EC" id="1.1.1.85"/>
    </reaction>
</comment>
<comment type="cofactor">
    <cofactor evidence="1">
        <name>Mg(2+)</name>
        <dbReference type="ChEBI" id="CHEBI:18420"/>
    </cofactor>
    <cofactor evidence="1">
        <name>Mn(2+)</name>
        <dbReference type="ChEBI" id="CHEBI:29035"/>
    </cofactor>
    <text evidence="1">Binds 1 Mg(2+) or Mn(2+) ion per subunit.</text>
</comment>
<comment type="pathway">
    <text evidence="1">Amino-acid biosynthesis; L-leucine biosynthesis; L-leucine from 3-methyl-2-oxobutanoate: step 3/4.</text>
</comment>
<comment type="subunit">
    <text evidence="1">Homodimer.</text>
</comment>
<comment type="subcellular location">
    <subcellularLocation>
        <location evidence="1">Cytoplasm</location>
    </subcellularLocation>
</comment>
<comment type="similarity">
    <text evidence="1">Belongs to the isocitrate and isopropylmalate dehydrogenases family. LeuB type 1 subfamily.</text>
</comment>
<name>LEU3_STAAC</name>
<proteinExistence type="inferred from homology"/>
<sequence>MTYNIVALPGDGIGPEILNGSLSLLEIISNKYNFNYQIEHHEFGGASIDTFGEPLTEKTLNACKRADAILLGAIGGPKWTDPNNRPEQGLLKLRKSLNLFVNIRPTTVVKGASSLSPLKEERVEGTDLVIVRELTSGIYFGEPRHFNNHEALDSLTYTREEIERIVHVAFKLAASRRGKLTSVDKENVLASSKLWRKVVNEVSQLYPEVTVNHLLVDACSMHLITNPKQFDVIVCENLFGDILSDEASVIPGSLGLSPSASFSNDGPRLYEPIHGSAPDIAGKNVANPFGMILSLAMCLRESLNQPDAADELEQHIYSMIEHGQTTADLGGKLNTTDIFEILSQKLNH</sequence>
<dbReference type="EC" id="1.1.1.85" evidence="1"/>
<dbReference type="EMBL" id="CP000046">
    <property type="protein sequence ID" value="AAW37010.1"/>
    <property type="molecule type" value="Genomic_DNA"/>
</dbReference>
<dbReference type="RefSeq" id="WP_000221958.1">
    <property type="nucleotide sequence ID" value="NZ_JBGOFO010000006.1"/>
</dbReference>
<dbReference type="SMR" id="Q5HEE3"/>
<dbReference type="KEGG" id="sac:SACOL2047"/>
<dbReference type="HOGENOM" id="CLU_031953_0_3_9"/>
<dbReference type="UniPathway" id="UPA00048">
    <property type="reaction ID" value="UER00072"/>
</dbReference>
<dbReference type="Proteomes" id="UP000000530">
    <property type="component" value="Chromosome"/>
</dbReference>
<dbReference type="GO" id="GO:0005829">
    <property type="term" value="C:cytosol"/>
    <property type="evidence" value="ECO:0007669"/>
    <property type="project" value="TreeGrafter"/>
</dbReference>
<dbReference type="GO" id="GO:0003862">
    <property type="term" value="F:3-isopropylmalate dehydrogenase activity"/>
    <property type="evidence" value="ECO:0007669"/>
    <property type="project" value="UniProtKB-UniRule"/>
</dbReference>
<dbReference type="GO" id="GO:0000287">
    <property type="term" value="F:magnesium ion binding"/>
    <property type="evidence" value="ECO:0007669"/>
    <property type="project" value="InterPro"/>
</dbReference>
<dbReference type="GO" id="GO:0051287">
    <property type="term" value="F:NAD binding"/>
    <property type="evidence" value="ECO:0007669"/>
    <property type="project" value="InterPro"/>
</dbReference>
<dbReference type="GO" id="GO:0009098">
    <property type="term" value="P:L-leucine biosynthetic process"/>
    <property type="evidence" value="ECO:0007669"/>
    <property type="project" value="UniProtKB-UniRule"/>
</dbReference>
<dbReference type="FunFam" id="3.40.718.10:FF:000006">
    <property type="entry name" value="3-isopropylmalate dehydrogenase"/>
    <property type="match status" value="1"/>
</dbReference>
<dbReference type="Gene3D" id="3.40.718.10">
    <property type="entry name" value="Isopropylmalate Dehydrogenase"/>
    <property type="match status" value="1"/>
</dbReference>
<dbReference type="HAMAP" id="MF_01033">
    <property type="entry name" value="LeuB_type1"/>
    <property type="match status" value="1"/>
</dbReference>
<dbReference type="InterPro" id="IPR019818">
    <property type="entry name" value="IsoCit/isopropylmalate_DH_CS"/>
</dbReference>
<dbReference type="InterPro" id="IPR024084">
    <property type="entry name" value="IsoPropMal-DH-like_dom"/>
</dbReference>
<dbReference type="InterPro" id="IPR004429">
    <property type="entry name" value="Isopropylmalate_DH"/>
</dbReference>
<dbReference type="NCBIfam" id="TIGR00169">
    <property type="entry name" value="leuB"/>
    <property type="match status" value="1"/>
</dbReference>
<dbReference type="PANTHER" id="PTHR42979">
    <property type="entry name" value="3-ISOPROPYLMALATE DEHYDROGENASE"/>
    <property type="match status" value="1"/>
</dbReference>
<dbReference type="PANTHER" id="PTHR42979:SF1">
    <property type="entry name" value="3-ISOPROPYLMALATE DEHYDROGENASE"/>
    <property type="match status" value="1"/>
</dbReference>
<dbReference type="Pfam" id="PF00180">
    <property type="entry name" value="Iso_dh"/>
    <property type="match status" value="1"/>
</dbReference>
<dbReference type="SMART" id="SM01329">
    <property type="entry name" value="Iso_dh"/>
    <property type="match status" value="1"/>
</dbReference>
<dbReference type="SUPFAM" id="SSF53659">
    <property type="entry name" value="Isocitrate/Isopropylmalate dehydrogenase-like"/>
    <property type="match status" value="1"/>
</dbReference>
<dbReference type="PROSITE" id="PS00470">
    <property type="entry name" value="IDH_IMDH"/>
    <property type="match status" value="1"/>
</dbReference>